<protein>
    <recommendedName>
        <fullName>Uncharacterized protein HKRFX</fullName>
    </recommendedName>
    <alternativeName>
        <fullName>J1I</fullName>
    </alternativeName>
</protein>
<organismHost>
    <name type="scientific">Homo sapiens</name>
    <name type="common">Human</name>
    <dbReference type="NCBI Taxonomy" id="9606"/>
</organismHost>
<proteinExistence type="predicted"/>
<organism>
    <name type="scientific">Human cytomegalovirus (strain AD169)</name>
    <name type="common">HHV-5</name>
    <name type="synonym">Human herpesvirus 5</name>
    <dbReference type="NCBI Taxonomy" id="10360"/>
    <lineage>
        <taxon>Viruses</taxon>
        <taxon>Duplodnaviria</taxon>
        <taxon>Heunggongvirae</taxon>
        <taxon>Peploviricota</taxon>
        <taxon>Herviviricetes</taxon>
        <taxon>Herpesvirales</taxon>
        <taxon>Orthoherpesviridae</taxon>
        <taxon>Betaherpesvirinae</taxon>
        <taxon>Cytomegalovirus</taxon>
        <taxon>Cytomegalovirus humanbeta5</taxon>
        <taxon>Human cytomegalovirus</taxon>
    </lineage>
</organism>
<reference key="1">
    <citation type="journal article" date="1986" name="J. Mol. Biol.">
        <title>Sequence of the short unique region, short repeats, and part of the long repeats of human cytomegalovirus.</title>
        <authorList>
            <person name="Weston K.M."/>
            <person name="Barrell B.G."/>
        </authorList>
    </citation>
    <scope>NUCLEOTIDE SEQUENCE [GENOMIC DNA]</scope>
</reference>
<reference key="2">
    <citation type="journal article" date="1990" name="Curr. Top. Microbiol. Immunol.">
        <title>Analysis of the protein-coding content of the sequence of human cytomegalovirus strain AD169.</title>
        <authorList>
            <person name="Chee M.S."/>
            <person name="Bankier A.T."/>
            <person name="Beck S."/>
            <person name="Bohni R."/>
            <person name="Brown C.M."/>
            <person name="Cerny R."/>
            <person name="Horsnell T."/>
            <person name="Hutchison C.A. III"/>
            <person name="Kouzarides T."/>
            <person name="Martignetti J.A."/>
            <person name="Preddie E."/>
            <person name="Satchwell S.C."/>
            <person name="Tomlinson P."/>
            <person name="Weston K.M."/>
            <person name="Barrell B.G."/>
        </authorList>
    </citation>
    <scope>NUCLEOTIDE SEQUENCE [LARGE SCALE GENOMIC DNA]</scope>
</reference>
<dbReference type="EMBL" id="X17403">
    <property type="status" value="NOT_ANNOTATED_CDS"/>
    <property type="molecule type" value="Genomic_DNA"/>
</dbReference>
<dbReference type="EMBL" id="X04650">
    <property type="protein sequence ID" value="CAB37094.1"/>
    <property type="molecule type" value="Genomic_DNA"/>
</dbReference>
<dbReference type="PIR" id="B26078">
    <property type="entry name" value="QQBEC2"/>
</dbReference>
<dbReference type="Proteomes" id="UP000008991">
    <property type="component" value="Segment"/>
</dbReference>
<evidence type="ECO:0000256" key="1">
    <source>
        <dbReference type="SAM" id="MobiDB-lite"/>
    </source>
</evidence>
<feature type="chain" id="PRO_0000115263" description="Uncharacterized protein HKRFX">
    <location>
        <begin position="1"/>
        <end position="277"/>
    </location>
</feature>
<feature type="region of interest" description="Disordered" evidence="1">
    <location>
        <begin position="1"/>
        <end position="103"/>
    </location>
</feature>
<feature type="region of interest" description="Disordered" evidence="1">
    <location>
        <begin position="254"/>
        <end position="277"/>
    </location>
</feature>
<feature type="compositionally biased region" description="Basic and acidic residues" evidence="1">
    <location>
        <begin position="48"/>
        <end position="65"/>
    </location>
</feature>
<feature type="compositionally biased region" description="Polar residues" evidence="1">
    <location>
        <begin position="66"/>
        <end position="77"/>
    </location>
</feature>
<feature type="compositionally biased region" description="Basic residues" evidence="1">
    <location>
        <begin position="82"/>
        <end position="91"/>
    </location>
</feature>
<accession>P09711</accession>
<name>J1I_HCMVA</name>
<sequence>PPLRGANSPGPSATPVPGPNTVPHTPRLRNTPASPAARTLENPRQAQRRNDTGKDRGTHRQRAETPSRSPVPTTNTVGRHAPAVRRQRRTQHAYGPQHSLEDPPRGPAPAVFWVCRGAAGWVCAGCVAGVCWVCRGCVGRVCQGVSRACAGCVVPGVSRACGGCAGGVWWRGVSAVCAASGCAASQERVCGLAAVISPAVPRAVVPRPRALLFVCPQGPMLPSPGNFLFSPGNHTDTDTRLLFAVRAARRFYSPSPSSAPHATSRRPHTQLQVSPPR</sequence>